<feature type="chain" id="PRO_0000388087" description="Ubiquinone biosynthesis protein COQ4 homolog 1, mitochondrial">
    <location>
        <begin position="1"/>
        <end position="252"/>
    </location>
</feature>
<feature type="binding site" evidence="1">
    <location>
        <position position="130"/>
    </location>
    <ligand>
        <name>Zn(2+)</name>
        <dbReference type="ChEBI" id="CHEBI:29105"/>
    </ligand>
</feature>
<feature type="binding site" evidence="1">
    <location>
        <position position="131"/>
    </location>
    <ligand>
        <name>Zn(2+)</name>
        <dbReference type="ChEBI" id="CHEBI:29105"/>
    </ligand>
</feature>
<feature type="binding site" evidence="1">
    <location>
        <position position="134"/>
    </location>
    <ligand>
        <name>Zn(2+)</name>
        <dbReference type="ChEBI" id="CHEBI:29105"/>
    </ligand>
</feature>
<feature type="binding site" evidence="1">
    <location>
        <position position="146"/>
    </location>
    <ligand>
        <name>Zn(2+)</name>
        <dbReference type="ChEBI" id="CHEBI:29105"/>
    </ligand>
</feature>
<dbReference type="EC" id="4.1.1.130" evidence="1"/>
<dbReference type="EMBL" id="AAHK01000683">
    <property type="protein sequence ID" value="EAN90006.1"/>
    <property type="molecule type" value="Genomic_DNA"/>
</dbReference>
<dbReference type="RefSeq" id="XP_811857.1">
    <property type="nucleotide sequence ID" value="XM_806764.1"/>
</dbReference>
<dbReference type="SMR" id="Q4DBV7"/>
<dbReference type="FunCoup" id="Q4DBV7">
    <property type="interactions" value="297"/>
</dbReference>
<dbReference type="STRING" id="353153.Q4DBV7"/>
<dbReference type="PaxDb" id="353153-Q4DBV7"/>
<dbReference type="EnsemblProtists" id="EAN90006">
    <property type="protein sequence ID" value="EAN90006"/>
    <property type="gene ID" value="Tc00.1047053510357.70"/>
</dbReference>
<dbReference type="GeneID" id="3542888"/>
<dbReference type="KEGG" id="tcr:510357.70"/>
<dbReference type="eggNOG" id="KOG3244">
    <property type="taxonomic scope" value="Eukaryota"/>
</dbReference>
<dbReference type="InParanoid" id="Q4DBV7"/>
<dbReference type="OMA" id="YYERHFH"/>
<dbReference type="UniPathway" id="UPA00232"/>
<dbReference type="Proteomes" id="UP000002296">
    <property type="component" value="Unassembled WGS sequence"/>
</dbReference>
<dbReference type="GO" id="GO:0031314">
    <property type="term" value="C:extrinsic component of mitochondrial inner membrane"/>
    <property type="evidence" value="ECO:0007669"/>
    <property type="project" value="UniProtKB-UniRule"/>
</dbReference>
<dbReference type="GO" id="GO:0006744">
    <property type="term" value="P:ubiquinone biosynthetic process"/>
    <property type="evidence" value="ECO:0007669"/>
    <property type="project" value="UniProtKB-UniRule"/>
</dbReference>
<dbReference type="HAMAP" id="MF_03111">
    <property type="entry name" value="Coq4"/>
    <property type="match status" value="1"/>
</dbReference>
<dbReference type="InterPro" id="IPR007715">
    <property type="entry name" value="Coq4"/>
</dbReference>
<dbReference type="InterPro" id="IPR027540">
    <property type="entry name" value="Coq4_euk"/>
</dbReference>
<dbReference type="PANTHER" id="PTHR12922">
    <property type="entry name" value="UBIQUINONE BIOSYNTHESIS PROTEIN"/>
    <property type="match status" value="1"/>
</dbReference>
<dbReference type="PANTHER" id="PTHR12922:SF7">
    <property type="entry name" value="UBIQUINONE BIOSYNTHESIS PROTEIN COQ4 HOMOLOG, MITOCHONDRIAL"/>
    <property type="match status" value="1"/>
</dbReference>
<dbReference type="Pfam" id="PF05019">
    <property type="entry name" value="Coq4"/>
    <property type="match status" value="1"/>
</dbReference>
<comment type="function">
    <text evidence="1">Lyase that catalyzes the C1-decarboxylation of 4-hydroxy-3-methoxy-5-(all-trans-polyprenyl)benzoic acid into 2-methoxy-6-(all-trans-polyprenyl)phenol during ubiquinone biosynthesis.</text>
</comment>
<comment type="catalytic activity">
    <reaction evidence="1">
        <text>a 4-hydroxy-3-methoxy-5-(all-trans-polyprenyl)benzoate + H(+) = a 2-methoxy-6-(all-trans-polyprenyl)phenol + CO2</text>
        <dbReference type="Rhea" id="RHEA:81179"/>
        <dbReference type="Rhea" id="RHEA-COMP:9551"/>
        <dbReference type="Rhea" id="RHEA-COMP:10931"/>
        <dbReference type="ChEBI" id="CHEBI:15378"/>
        <dbReference type="ChEBI" id="CHEBI:16526"/>
        <dbReference type="ChEBI" id="CHEBI:62731"/>
        <dbReference type="ChEBI" id="CHEBI:84443"/>
        <dbReference type="EC" id="4.1.1.130"/>
    </reaction>
</comment>
<comment type="cofactor">
    <cofactor evidence="1">
        <name>Zn(2+)</name>
        <dbReference type="ChEBI" id="CHEBI:29105"/>
    </cofactor>
</comment>
<comment type="pathway">
    <text evidence="1">Cofactor biosynthesis; ubiquinone biosynthesis.</text>
</comment>
<comment type="subunit">
    <text evidence="1">Component of a multi-subunit COQ enzyme complex.</text>
</comment>
<comment type="subcellular location">
    <subcellularLocation>
        <location evidence="1">Mitochondrion inner membrane</location>
        <topology evidence="1">Peripheral membrane protein</topology>
        <orientation evidence="1">Matrix side</orientation>
    </subcellularLocation>
</comment>
<comment type="miscellaneous">
    <text evidence="1">This protein may be expected to contain an N-terminal transit peptide but none has been predicted.</text>
</comment>
<comment type="similarity">
    <text evidence="1">Belongs to the COQ4 family.</text>
</comment>
<organism>
    <name type="scientific">Trypanosoma cruzi (strain CL Brener)</name>
    <dbReference type="NCBI Taxonomy" id="353153"/>
    <lineage>
        <taxon>Eukaryota</taxon>
        <taxon>Discoba</taxon>
        <taxon>Euglenozoa</taxon>
        <taxon>Kinetoplastea</taxon>
        <taxon>Metakinetoplastina</taxon>
        <taxon>Trypanosomatida</taxon>
        <taxon>Trypanosomatidae</taxon>
        <taxon>Trypanosoma</taxon>
        <taxon>Schizotrypanum</taxon>
    </lineage>
</organism>
<reference key="1">
    <citation type="journal article" date="2005" name="Science">
        <title>The genome sequence of Trypanosoma cruzi, etiologic agent of Chagas disease.</title>
        <authorList>
            <person name="El-Sayed N.M.A."/>
            <person name="Myler P.J."/>
            <person name="Bartholomeu D.C."/>
            <person name="Nilsson D."/>
            <person name="Aggarwal G."/>
            <person name="Tran A.-N."/>
            <person name="Ghedin E."/>
            <person name="Worthey E.A."/>
            <person name="Delcher A.L."/>
            <person name="Blandin G."/>
            <person name="Westenberger S.J."/>
            <person name="Caler E."/>
            <person name="Cerqueira G.C."/>
            <person name="Branche C."/>
            <person name="Haas B."/>
            <person name="Anupama A."/>
            <person name="Arner E."/>
            <person name="Aslund L."/>
            <person name="Attipoe P."/>
            <person name="Bontempi E."/>
            <person name="Bringaud F."/>
            <person name="Burton P."/>
            <person name="Cadag E."/>
            <person name="Campbell D.A."/>
            <person name="Carrington M."/>
            <person name="Crabtree J."/>
            <person name="Darban H."/>
            <person name="da Silveira J.F."/>
            <person name="de Jong P."/>
            <person name="Edwards K."/>
            <person name="Englund P.T."/>
            <person name="Fazelina G."/>
            <person name="Feldblyum T."/>
            <person name="Ferella M."/>
            <person name="Frasch A.C."/>
            <person name="Gull K."/>
            <person name="Horn D."/>
            <person name="Hou L."/>
            <person name="Huang Y."/>
            <person name="Kindlund E."/>
            <person name="Klingbeil M."/>
            <person name="Kluge S."/>
            <person name="Koo H."/>
            <person name="Lacerda D."/>
            <person name="Levin M.J."/>
            <person name="Lorenzi H."/>
            <person name="Louie T."/>
            <person name="Machado C.R."/>
            <person name="McCulloch R."/>
            <person name="McKenna A."/>
            <person name="Mizuno Y."/>
            <person name="Mottram J.C."/>
            <person name="Nelson S."/>
            <person name="Ochaya S."/>
            <person name="Osoegawa K."/>
            <person name="Pai G."/>
            <person name="Parsons M."/>
            <person name="Pentony M."/>
            <person name="Pettersson U."/>
            <person name="Pop M."/>
            <person name="Ramirez J.L."/>
            <person name="Rinta J."/>
            <person name="Robertson L."/>
            <person name="Salzberg S.L."/>
            <person name="Sanchez D.O."/>
            <person name="Seyler A."/>
            <person name="Sharma R."/>
            <person name="Shetty J."/>
            <person name="Simpson A.J."/>
            <person name="Sisk E."/>
            <person name="Tammi M.T."/>
            <person name="Tarleton R."/>
            <person name="Teixeira S."/>
            <person name="Van Aken S."/>
            <person name="Vogt C."/>
            <person name="Ward P.N."/>
            <person name="Wickstead B."/>
            <person name="Wortman J."/>
            <person name="White O."/>
            <person name="Fraser C.M."/>
            <person name="Stuart K.D."/>
            <person name="Andersson B."/>
        </authorList>
    </citation>
    <scope>NUCLEOTIDE SEQUENCE [LARGE SCALE GENOMIC DNA]</scope>
    <source>
        <strain>CL Brener</strain>
    </source>
</reference>
<protein>
    <recommendedName>
        <fullName>Ubiquinone biosynthesis protein COQ4 homolog 1, mitochondrial</fullName>
    </recommendedName>
    <alternativeName>
        <fullName>4-hydroxy-3-methoxy-5-polyprenylbenzoate decarboxylase</fullName>
        <ecNumber evidence="1">4.1.1.130</ecNumber>
    </alternativeName>
    <alternativeName>
        <fullName evidence="1">Coenzyme Q biosynthesis protein 4 homolog 1</fullName>
    </alternativeName>
</protein>
<proteinExistence type="inferred from homology"/>
<name>COQ41_TRYCC</name>
<accession>Q4DBV7</accession>
<evidence type="ECO:0000255" key="1">
    <source>
        <dbReference type="HAMAP-Rule" id="MF_03111"/>
    </source>
</evidence>
<keyword id="KW-0456">Lyase</keyword>
<keyword id="KW-0472">Membrane</keyword>
<keyword id="KW-0479">Metal-binding</keyword>
<keyword id="KW-0496">Mitochondrion</keyword>
<keyword id="KW-0999">Mitochondrion inner membrane</keyword>
<keyword id="KW-1185">Reference proteome</keyword>
<keyword id="KW-0831">Ubiquinone biosynthesis</keyword>
<keyword id="KW-0862">Zinc</keyword>
<gene>
    <name type="ORF">Tc00.1047053510357.70</name>
</gene>
<sequence>MLKSGFYLLGGVVGAASSLPAFVAATTRSIWDPVNADDVAAVGEITALTALGHMKQSMMSDRTGRMILRTQPRVTDETLEFASRQPPGTFGHRYAQFMKFNRFTPNGRTPVAHIADPTLAYVMQRQRETHDFLHTCIGCGRTVEEEIIVKLLEWRHTGLPIGLLAVIGSLPWLSRQQIRNMELYFEWAEVNAPNQRHGEVNIPYITNVWWEYYLDKPYEQLLADTGITPIDVFLQQKKGKTALANGEAIDGK</sequence>